<protein>
    <recommendedName>
        <fullName evidence="1">dTTP/UTP pyrophosphatase</fullName>
        <shortName evidence="1">dTTPase/UTPase</shortName>
        <ecNumber evidence="1">3.6.1.9</ecNumber>
    </recommendedName>
    <alternativeName>
        <fullName evidence="1">Nucleoside triphosphate pyrophosphatase</fullName>
    </alternativeName>
    <alternativeName>
        <fullName evidence="1">Nucleotide pyrophosphatase</fullName>
        <shortName evidence="1">Nucleotide PPase</shortName>
    </alternativeName>
</protein>
<reference key="1">
    <citation type="submission" date="2008-10" db="EMBL/GenBank/DDBJ databases">
        <title>Genome sequence of Bacillus cereus G9842.</title>
        <authorList>
            <person name="Dodson R.J."/>
            <person name="Durkin A.S."/>
            <person name="Rosovitz M.J."/>
            <person name="Rasko D.A."/>
            <person name="Hoffmaster A."/>
            <person name="Ravel J."/>
            <person name="Sutton G."/>
        </authorList>
    </citation>
    <scope>NUCLEOTIDE SEQUENCE [LARGE SCALE GENOMIC DNA]</scope>
    <source>
        <strain>G9842</strain>
    </source>
</reference>
<proteinExistence type="inferred from homology"/>
<comment type="function">
    <text evidence="1">Nucleoside triphosphate pyrophosphatase that hydrolyzes dTTP and UTP. May have a dual role in cell division arrest and in preventing the incorporation of modified nucleotides into cellular nucleic acids.</text>
</comment>
<comment type="catalytic activity">
    <reaction evidence="1">
        <text>dTTP + H2O = dTMP + diphosphate + H(+)</text>
        <dbReference type="Rhea" id="RHEA:28534"/>
        <dbReference type="ChEBI" id="CHEBI:15377"/>
        <dbReference type="ChEBI" id="CHEBI:15378"/>
        <dbReference type="ChEBI" id="CHEBI:33019"/>
        <dbReference type="ChEBI" id="CHEBI:37568"/>
        <dbReference type="ChEBI" id="CHEBI:63528"/>
        <dbReference type="EC" id="3.6.1.9"/>
    </reaction>
</comment>
<comment type="catalytic activity">
    <reaction evidence="1">
        <text>UTP + H2O = UMP + diphosphate + H(+)</text>
        <dbReference type="Rhea" id="RHEA:29395"/>
        <dbReference type="ChEBI" id="CHEBI:15377"/>
        <dbReference type="ChEBI" id="CHEBI:15378"/>
        <dbReference type="ChEBI" id="CHEBI:33019"/>
        <dbReference type="ChEBI" id="CHEBI:46398"/>
        <dbReference type="ChEBI" id="CHEBI:57865"/>
        <dbReference type="EC" id="3.6.1.9"/>
    </reaction>
</comment>
<comment type="cofactor">
    <cofactor evidence="1">
        <name>a divalent metal cation</name>
        <dbReference type="ChEBI" id="CHEBI:60240"/>
    </cofactor>
</comment>
<comment type="subcellular location">
    <subcellularLocation>
        <location evidence="1">Cytoplasm</location>
    </subcellularLocation>
</comment>
<comment type="similarity">
    <text evidence="1">Belongs to the Maf family. YhdE subfamily.</text>
</comment>
<keyword id="KW-0963">Cytoplasm</keyword>
<keyword id="KW-0378">Hydrolase</keyword>
<keyword id="KW-0546">Nucleotide metabolism</keyword>
<dbReference type="EC" id="3.6.1.9" evidence="1"/>
<dbReference type="EMBL" id="CP001186">
    <property type="protein sequence ID" value="ACK96923.1"/>
    <property type="molecule type" value="Genomic_DNA"/>
</dbReference>
<dbReference type="RefSeq" id="WP_000720491.1">
    <property type="nucleotide sequence ID" value="NC_011772.1"/>
</dbReference>
<dbReference type="SMR" id="B7IIW6"/>
<dbReference type="KEGG" id="bcg:BCG9842_B0661"/>
<dbReference type="HOGENOM" id="CLU_040416_0_0_9"/>
<dbReference type="Proteomes" id="UP000006744">
    <property type="component" value="Chromosome"/>
</dbReference>
<dbReference type="GO" id="GO:0005737">
    <property type="term" value="C:cytoplasm"/>
    <property type="evidence" value="ECO:0007669"/>
    <property type="project" value="UniProtKB-SubCell"/>
</dbReference>
<dbReference type="GO" id="GO:0036218">
    <property type="term" value="F:dTTP diphosphatase activity"/>
    <property type="evidence" value="ECO:0007669"/>
    <property type="project" value="RHEA"/>
</dbReference>
<dbReference type="GO" id="GO:0036221">
    <property type="term" value="F:UTP diphosphatase activity"/>
    <property type="evidence" value="ECO:0007669"/>
    <property type="project" value="RHEA"/>
</dbReference>
<dbReference type="GO" id="GO:0009117">
    <property type="term" value="P:nucleotide metabolic process"/>
    <property type="evidence" value="ECO:0007669"/>
    <property type="project" value="UniProtKB-KW"/>
</dbReference>
<dbReference type="CDD" id="cd00555">
    <property type="entry name" value="Maf"/>
    <property type="match status" value="1"/>
</dbReference>
<dbReference type="FunFam" id="3.90.950.10:FF:000007">
    <property type="entry name" value="dTTP/UTP pyrophosphatase"/>
    <property type="match status" value="1"/>
</dbReference>
<dbReference type="Gene3D" id="3.90.950.10">
    <property type="match status" value="1"/>
</dbReference>
<dbReference type="HAMAP" id="MF_00528">
    <property type="entry name" value="Maf"/>
    <property type="match status" value="1"/>
</dbReference>
<dbReference type="InterPro" id="IPR029001">
    <property type="entry name" value="ITPase-like_fam"/>
</dbReference>
<dbReference type="InterPro" id="IPR003697">
    <property type="entry name" value="Maf-like"/>
</dbReference>
<dbReference type="NCBIfam" id="TIGR00172">
    <property type="entry name" value="maf"/>
    <property type="match status" value="1"/>
</dbReference>
<dbReference type="PANTHER" id="PTHR43213">
    <property type="entry name" value="BIFUNCTIONAL DTTP/UTP PYROPHOSPHATASE/METHYLTRANSFERASE PROTEIN-RELATED"/>
    <property type="match status" value="1"/>
</dbReference>
<dbReference type="PANTHER" id="PTHR43213:SF5">
    <property type="entry name" value="BIFUNCTIONAL DTTP_UTP PYROPHOSPHATASE_METHYLTRANSFERASE PROTEIN-RELATED"/>
    <property type="match status" value="1"/>
</dbReference>
<dbReference type="Pfam" id="PF02545">
    <property type="entry name" value="Maf"/>
    <property type="match status" value="1"/>
</dbReference>
<dbReference type="PIRSF" id="PIRSF006305">
    <property type="entry name" value="Maf"/>
    <property type="match status" value="1"/>
</dbReference>
<dbReference type="SUPFAM" id="SSF52972">
    <property type="entry name" value="ITPase-like"/>
    <property type="match status" value="1"/>
</dbReference>
<name>NTPPA_BACC2</name>
<organism>
    <name type="scientific">Bacillus cereus (strain G9842)</name>
    <dbReference type="NCBI Taxonomy" id="405531"/>
    <lineage>
        <taxon>Bacteria</taxon>
        <taxon>Bacillati</taxon>
        <taxon>Bacillota</taxon>
        <taxon>Bacilli</taxon>
        <taxon>Bacillales</taxon>
        <taxon>Bacillaceae</taxon>
        <taxon>Bacillus</taxon>
        <taxon>Bacillus cereus group</taxon>
    </lineage>
</organism>
<sequence>MKKIILASGSPRRKELLELASIPFEIVVSEVEETIGAYSSPSDIVMSLALQKASAVAENNSDHIVLGADTIVTYESRILGKPSNEDEAKEMLQLLSGKTHEVYTGVAIISKEKTVTFYERTEVTFWELTEEEIDTYVTSKEPLDKAGSYGIQGKGSIFVQNIQGDYYSVVGLPIARLVRELKQFDIDVTHA</sequence>
<gene>
    <name type="primary">maf</name>
    <name type="ordered locus">BCG9842_B0661</name>
</gene>
<feature type="chain" id="PRO_1000127770" description="dTTP/UTP pyrophosphatase">
    <location>
        <begin position="1"/>
        <end position="191"/>
    </location>
</feature>
<feature type="active site" description="Proton acceptor" evidence="1">
    <location>
        <position position="69"/>
    </location>
</feature>
<feature type="site" description="Important for substrate specificity" evidence="1">
    <location>
        <position position="12"/>
    </location>
</feature>
<feature type="site" description="Important for substrate specificity" evidence="1">
    <location>
        <position position="70"/>
    </location>
</feature>
<feature type="site" description="Important for substrate specificity" evidence="1">
    <location>
        <position position="152"/>
    </location>
</feature>
<evidence type="ECO:0000255" key="1">
    <source>
        <dbReference type="HAMAP-Rule" id="MF_00528"/>
    </source>
</evidence>
<accession>B7IIW6</accession>